<name>PNO1_CANAL</name>
<dbReference type="EMBL" id="CP017630">
    <property type="protein sequence ID" value="AOW31691.1"/>
    <property type="molecule type" value="Genomic_DNA"/>
</dbReference>
<dbReference type="RefSeq" id="XP_719379.1">
    <property type="nucleotide sequence ID" value="XM_714286.1"/>
</dbReference>
<dbReference type="SMR" id="Q5ACM4"/>
<dbReference type="FunCoup" id="Q5ACM4">
    <property type="interactions" value="995"/>
</dbReference>
<dbReference type="STRING" id="237561.Q5ACM4"/>
<dbReference type="EnsemblFungi" id="CR_10410C_A-T">
    <property type="protein sequence ID" value="CR_10410C_A-T-p1"/>
    <property type="gene ID" value="CR_10410C_A"/>
</dbReference>
<dbReference type="GeneID" id="3638957"/>
<dbReference type="KEGG" id="cal:CAALFM_CR10410CA"/>
<dbReference type="CGD" id="CAL0000173996">
    <property type="gene designation" value="orf19.7618"/>
</dbReference>
<dbReference type="VEuPathDB" id="FungiDB:CR_10410C_A"/>
<dbReference type="eggNOG" id="KOG3273">
    <property type="taxonomic scope" value="Eukaryota"/>
</dbReference>
<dbReference type="HOGENOM" id="CLU_064992_0_2_1"/>
<dbReference type="InParanoid" id="Q5ACM4"/>
<dbReference type="OMA" id="TPLRNNW"/>
<dbReference type="OrthoDB" id="1932641at2759"/>
<dbReference type="Proteomes" id="UP000000559">
    <property type="component" value="Chromosome R"/>
</dbReference>
<dbReference type="GO" id="GO:0005737">
    <property type="term" value="C:cytoplasm"/>
    <property type="evidence" value="ECO:0007669"/>
    <property type="project" value="UniProtKB-SubCell"/>
</dbReference>
<dbReference type="GO" id="GO:0005730">
    <property type="term" value="C:nucleolus"/>
    <property type="evidence" value="ECO:0007669"/>
    <property type="project" value="UniProtKB-SubCell"/>
</dbReference>
<dbReference type="GO" id="GO:0005634">
    <property type="term" value="C:nucleus"/>
    <property type="evidence" value="ECO:0000318"/>
    <property type="project" value="GO_Central"/>
</dbReference>
<dbReference type="GO" id="GO:0042134">
    <property type="term" value="F:rRNA primary transcript binding"/>
    <property type="evidence" value="ECO:0007669"/>
    <property type="project" value="EnsemblFungi"/>
</dbReference>
<dbReference type="GO" id="GO:0051082">
    <property type="term" value="F:unfolded protein binding"/>
    <property type="evidence" value="ECO:0007669"/>
    <property type="project" value="EnsemblFungi"/>
</dbReference>
<dbReference type="GO" id="GO:0000447">
    <property type="term" value="P:endonucleolytic cleavage in ITS1 to separate SSU-rRNA from 5.8S rRNA and LSU-rRNA from tricistronic rRNA transcript (SSU-rRNA, 5.8S rRNA, LSU-rRNA)"/>
    <property type="evidence" value="ECO:0007669"/>
    <property type="project" value="EnsemblFungi"/>
</dbReference>
<dbReference type="GO" id="GO:0000472">
    <property type="term" value="P:endonucleolytic cleavage to generate mature 5'-end of SSU-rRNA from (SSU-rRNA, 5.8S rRNA, LSU-rRNA)"/>
    <property type="evidence" value="ECO:0007669"/>
    <property type="project" value="EnsemblFungi"/>
</dbReference>
<dbReference type="GO" id="GO:0043248">
    <property type="term" value="P:proteasome assembly"/>
    <property type="evidence" value="ECO:0007669"/>
    <property type="project" value="EnsemblFungi"/>
</dbReference>
<dbReference type="GO" id="GO:0000056">
    <property type="term" value="P:ribosomal small subunit export from nucleus"/>
    <property type="evidence" value="ECO:0007669"/>
    <property type="project" value="EnsemblFungi"/>
</dbReference>
<dbReference type="GO" id="GO:0042255">
    <property type="term" value="P:ribosome assembly"/>
    <property type="evidence" value="ECO:0007669"/>
    <property type="project" value="EnsemblFungi"/>
</dbReference>
<dbReference type="CDD" id="cd22391">
    <property type="entry name" value="KH-I_PNO1_rpt1"/>
    <property type="match status" value="1"/>
</dbReference>
<dbReference type="CDD" id="cd22392">
    <property type="entry name" value="KH-I_PNO1_rpt2"/>
    <property type="match status" value="1"/>
</dbReference>
<dbReference type="FunFam" id="3.30.1370.10:FF:000009">
    <property type="entry name" value="RNA-binding protein PNO1"/>
    <property type="match status" value="1"/>
</dbReference>
<dbReference type="FunFam" id="3.30.1370.10:FF:000048">
    <property type="entry name" value="RNA-binding protein PNO1 isoform X2"/>
    <property type="match status" value="1"/>
</dbReference>
<dbReference type="Gene3D" id="3.30.1370.10">
    <property type="entry name" value="K Homology domain, type 1"/>
    <property type="match status" value="1"/>
</dbReference>
<dbReference type="InterPro" id="IPR055212">
    <property type="entry name" value="KH-I_PNO1_first"/>
</dbReference>
<dbReference type="InterPro" id="IPR004087">
    <property type="entry name" value="KH_dom"/>
</dbReference>
<dbReference type="InterPro" id="IPR036612">
    <property type="entry name" value="KH_dom_type_1_sf"/>
</dbReference>
<dbReference type="InterPro" id="IPR055211">
    <property type="entry name" value="KH_PNO1_2nd"/>
</dbReference>
<dbReference type="InterPro" id="IPR041174">
    <property type="entry name" value="KRR1-like_KH1"/>
</dbReference>
<dbReference type="PANTHER" id="PTHR12826">
    <property type="entry name" value="RIBONUCLEASE Y"/>
    <property type="match status" value="1"/>
</dbReference>
<dbReference type="PANTHER" id="PTHR12826:SF13">
    <property type="entry name" value="RNA-BINDING PROTEIN PNO1"/>
    <property type="match status" value="1"/>
</dbReference>
<dbReference type="Pfam" id="PF17903">
    <property type="entry name" value="KH_KRR1_1st"/>
    <property type="match status" value="1"/>
</dbReference>
<dbReference type="Pfam" id="PF22891">
    <property type="entry name" value="KH_PNO1_2nd"/>
    <property type="match status" value="1"/>
</dbReference>
<dbReference type="SMART" id="SM00322">
    <property type="entry name" value="KH"/>
    <property type="match status" value="1"/>
</dbReference>
<dbReference type="SUPFAM" id="SSF54791">
    <property type="entry name" value="Eukaryotic type KH-domain (KH-domain type I)"/>
    <property type="match status" value="1"/>
</dbReference>
<proteinExistence type="inferred from homology"/>
<protein>
    <recommendedName>
        <fullName>Pre-rRNA-processing protein PNO1</fullName>
    </recommendedName>
</protein>
<sequence>MAAPTAIRKSTEKSGINEQIQENSTLQSNQALDQNNDDEDMLIDTNAIPTTTVEDQDQSEPSNSLTIQQGETTELQLDESGKPKFSAASKSNMKVKLESRKVAVPPHRMTPLKNVWSKIYPPLVEHLKLQVRMNLKTKTVELRTNKYTTDVGALQKGADFVKAFTLGFDVDDAIALLRLDDLYIETFEIKDVKTLTGDHLSRAIGRIAGKDGKTKFAIENATRTRIVLADSKIHILGGFTHIRMAREAVVSLILGSPPGKVYGNLRTVASRMKERY</sequence>
<evidence type="ECO:0000250" key="1"/>
<evidence type="ECO:0000250" key="2">
    <source>
        <dbReference type="UniProtKB" id="Q99216"/>
    </source>
</evidence>
<evidence type="ECO:0000256" key="3">
    <source>
        <dbReference type="SAM" id="MobiDB-lite"/>
    </source>
</evidence>
<evidence type="ECO:0000305" key="4"/>
<feature type="chain" id="PRO_0000278365" description="Pre-rRNA-processing protein PNO1">
    <location>
        <begin position="1"/>
        <end position="276"/>
    </location>
</feature>
<feature type="domain" description="KH">
    <location>
        <begin position="197"/>
        <end position="249"/>
    </location>
</feature>
<feature type="region of interest" description="Disordered" evidence="3">
    <location>
        <begin position="1"/>
        <end position="39"/>
    </location>
</feature>
<feature type="region of interest" description="Disordered" evidence="3">
    <location>
        <begin position="51"/>
        <end position="92"/>
    </location>
</feature>
<feature type="compositionally biased region" description="Polar residues" evidence="3">
    <location>
        <begin position="13"/>
        <end position="34"/>
    </location>
</feature>
<feature type="compositionally biased region" description="Polar residues" evidence="3">
    <location>
        <begin position="51"/>
        <end position="75"/>
    </location>
</feature>
<organism>
    <name type="scientific">Candida albicans (strain SC5314 / ATCC MYA-2876)</name>
    <name type="common">Yeast</name>
    <dbReference type="NCBI Taxonomy" id="237561"/>
    <lineage>
        <taxon>Eukaryota</taxon>
        <taxon>Fungi</taxon>
        <taxon>Dikarya</taxon>
        <taxon>Ascomycota</taxon>
        <taxon>Saccharomycotina</taxon>
        <taxon>Pichiomycetes</taxon>
        <taxon>Debaryomycetaceae</taxon>
        <taxon>Candida/Lodderomyces clade</taxon>
        <taxon>Candida</taxon>
    </lineage>
</organism>
<gene>
    <name type="primary">PNO1</name>
    <name type="ordered locus">CAALFM_CR10410CA</name>
    <name type="ORF">CaO19.7618</name>
</gene>
<comment type="function">
    <text evidence="1">Required for small ribosomal subunit (SSU) synthesis. Has a role in the processing of early nucleolar and late cytoplasmic pre-RNA species (By similarity).</text>
</comment>
<comment type="subunit">
    <text evidence="1">Component of the small ribosomal subunit, ribosomal RNA processing complex (SSU RRP complex).</text>
</comment>
<comment type="subcellular location">
    <subcellularLocation>
        <location evidence="2">Cytoplasm</location>
    </subcellularLocation>
    <subcellularLocation>
        <location evidence="2">Nucleus</location>
        <location evidence="2">Nucleolus</location>
    </subcellularLocation>
</comment>
<comment type="similarity">
    <text evidence="4">Belongs to the PNO1 family.</text>
</comment>
<reference key="1">
    <citation type="journal article" date="2004" name="Proc. Natl. Acad. Sci. U.S.A.">
        <title>The diploid genome sequence of Candida albicans.</title>
        <authorList>
            <person name="Jones T."/>
            <person name="Federspiel N.A."/>
            <person name="Chibana H."/>
            <person name="Dungan J."/>
            <person name="Kalman S."/>
            <person name="Magee B.B."/>
            <person name="Newport G."/>
            <person name="Thorstenson Y.R."/>
            <person name="Agabian N."/>
            <person name="Magee P.T."/>
            <person name="Davis R.W."/>
            <person name="Scherer S."/>
        </authorList>
    </citation>
    <scope>NUCLEOTIDE SEQUENCE [LARGE SCALE GENOMIC DNA]</scope>
    <source>
        <strain>SC5314 / ATCC MYA-2876</strain>
    </source>
</reference>
<reference key="2">
    <citation type="journal article" date="2007" name="Genome Biol.">
        <title>Assembly of the Candida albicans genome into sixteen supercontigs aligned on the eight chromosomes.</title>
        <authorList>
            <person name="van het Hoog M."/>
            <person name="Rast T.J."/>
            <person name="Martchenko M."/>
            <person name="Grindle S."/>
            <person name="Dignard D."/>
            <person name="Hogues H."/>
            <person name="Cuomo C."/>
            <person name="Berriman M."/>
            <person name="Scherer S."/>
            <person name="Magee B.B."/>
            <person name="Whiteway M."/>
            <person name="Chibana H."/>
            <person name="Nantel A."/>
            <person name="Magee P.T."/>
        </authorList>
    </citation>
    <scope>GENOME REANNOTATION</scope>
    <source>
        <strain>SC5314 / ATCC MYA-2876</strain>
    </source>
</reference>
<reference key="3">
    <citation type="journal article" date="2013" name="Genome Biol.">
        <title>Assembly of a phased diploid Candida albicans genome facilitates allele-specific measurements and provides a simple model for repeat and indel structure.</title>
        <authorList>
            <person name="Muzzey D."/>
            <person name="Schwartz K."/>
            <person name="Weissman J.S."/>
            <person name="Sherlock G."/>
        </authorList>
    </citation>
    <scope>NUCLEOTIDE SEQUENCE [LARGE SCALE GENOMIC DNA]</scope>
    <scope>GENOME REANNOTATION</scope>
    <source>
        <strain>SC5314 / ATCC MYA-2876</strain>
    </source>
</reference>
<keyword id="KW-0963">Cytoplasm</keyword>
<keyword id="KW-0539">Nucleus</keyword>
<keyword id="KW-1185">Reference proteome</keyword>
<keyword id="KW-0690">Ribosome biogenesis</keyword>
<keyword id="KW-0694">RNA-binding</keyword>
<accession>Q5ACM4</accession>
<accession>A0A1D8PU78</accession>